<reference key="1">
    <citation type="journal article" date="1993" name="Proc. Natl. Acad. Sci. U.S.A.">
        <title>Selective amplification of additional members of the ADP-ribosylation factor (ARF) family: cloning of additional human and Drosophila ARF-like genes.</title>
        <authorList>
            <person name="Clark J."/>
            <person name="Moore L."/>
            <person name="Krasinskas A."/>
            <person name="Way J."/>
            <person name="Battey J.F."/>
            <person name="Tamkun J.W."/>
            <person name="Kahn R.A."/>
        </authorList>
    </citation>
    <scope>NUCLEOTIDE SEQUENCE [GENOMIC DNA]</scope>
    <source>
        <strain>iso1</strain>
    </source>
</reference>
<reference key="2">
    <citation type="journal article" date="2000" name="Science">
        <title>The genome sequence of Drosophila melanogaster.</title>
        <authorList>
            <person name="Adams M.D."/>
            <person name="Celniker S.E."/>
            <person name="Holt R.A."/>
            <person name="Evans C.A."/>
            <person name="Gocayne J.D."/>
            <person name="Amanatides P.G."/>
            <person name="Scherer S.E."/>
            <person name="Li P.W."/>
            <person name="Hoskins R.A."/>
            <person name="Galle R.F."/>
            <person name="George R.A."/>
            <person name="Lewis S.E."/>
            <person name="Richards S."/>
            <person name="Ashburner M."/>
            <person name="Henderson S.N."/>
            <person name="Sutton G.G."/>
            <person name="Wortman J.R."/>
            <person name="Yandell M.D."/>
            <person name="Zhang Q."/>
            <person name="Chen L.X."/>
            <person name="Brandon R.C."/>
            <person name="Rogers Y.-H.C."/>
            <person name="Blazej R.G."/>
            <person name="Champe M."/>
            <person name="Pfeiffer B.D."/>
            <person name="Wan K.H."/>
            <person name="Doyle C."/>
            <person name="Baxter E.G."/>
            <person name="Helt G."/>
            <person name="Nelson C.R."/>
            <person name="Miklos G.L.G."/>
            <person name="Abril J.F."/>
            <person name="Agbayani A."/>
            <person name="An H.-J."/>
            <person name="Andrews-Pfannkoch C."/>
            <person name="Baldwin D."/>
            <person name="Ballew R.M."/>
            <person name="Basu A."/>
            <person name="Baxendale J."/>
            <person name="Bayraktaroglu L."/>
            <person name="Beasley E.M."/>
            <person name="Beeson K.Y."/>
            <person name="Benos P.V."/>
            <person name="Berman B.P."/>
            <person name="Bhandari D."/>
            <person name="Bolshakov S."/>
            <person name="Borkova D."/>
            <person name="Botchan M.R."/>
            <person name="Bouck J."/>
            <person name="Brokstein P."/>
            <person name="Brottier P."/>
            <person name="Burtis K.C."/>
            <person name="Busam D.A."/>
            <person name="Butler H."/>
            <person name="Cadieu E."/>
            <person name="Center A."/>
            <person name="Chandra I."/>
            <person name="Cherry J.M."/>
            <person name="Cawley S."/>
            <person name="Dahlke C."/>
            <person name="Davenport L.B."/>
            <person name="Davies P."/>
            <person name="de Pablos B."/>
            <person name="Delcher A."/>
            <person name="Deng Z."/>
            <person name="Mays A.D."/>
            <person name="Dew I."/>
            <person name="Dietz S.M."/>
            <person name="Dodson K."/>
            <person name="Doup L.E."/>
            <person name="Downes M."/>
            <person name="Dugan-Rocha S."/>
            <person name="Dunkov B.C."/>
            <person name="Dunn P."/>
            <person name="Durbin K.J."/>
            <person name="Evangelista C.C."/>
            <person name="Ferraz C."/>
            <person name="Ferriera S."/>
            <person name="Fleischmann W."/>
            <person name="Fosler C."/>
            <person name="Gabrielian A.E."/>
            <person name="Garg N.S."/>
            <person name="Gelbart W.M."/>
            <person name="Glasser K."/>
            <person name="Glodek A."/>
            <person name="Gong F."/>
            <person name="Gorrell J.H."/>
            <person name="Gu Z."/>
            <person name="Guan P."/>
            <person name="Harris M."/>
            <person name="Harris N.L."/>
            <person name="Harvey D.A."/>
            <person name="Heiman T.J."/>
            <person name="Hernandez J.R."/>
            <person name="Houck J."/>
            <person name="Hostin D."/>
            <person name="Houston K.A."/>
            <person name="Howland T.J."/>
            <person name="Wei M.-H."/>
            <person name="Ibegwam C."/>
            <person name="Jalali M."/>
            <person name="Kalush F."/>
            <person name="Karpen G.H."/>
            <person name="Ke Z."/>
            <person name="Kennison J.A."/>
            <person name="Ketchum K.A."/>
            <person name="Kimmel B.E."/>
            <person name="Kodira C.D."/>
            <person name="Kraft C.L."/>
            <person name="Kravitz S."/>
            <person name="Kulp D."/>
            <person name="Lai Z."/>
            <person name="Lasko P."/>
            <person name="Lei Y."/>
            <person name="Levitsky A.A."/>
            <person name="Li J.H."/>
            <person name="Li Z."/>
            <person name="Liang Y."/>
            <person name="Lin X."/>
            <person name="Liu X."/>
            <person name="Mattei B."/>
            <person name="McIntosh T.C."/>
            <person name="McLeod M.P."/>
            <person name="McPherson D."/>
            <person name="Merkulov G."/>
            <person name="Milshina N.V."/>
            <person name="Mobarry C."/>
            <person name="Morris J."/>
            <person name="Moshrefi A."/>
            <person name="Mount S.M."/>
            <person name="Moy M."/>
            <person name="Murphy B."/>
            <person name="Murphy L."/>
            <person name="Muzny D.M."/>
            <person name="Nelson D.L."/>
            <person name="Nelson D.R."/>
            <person name="Nelson K.A."/>
            <person name="Nixon K."/>
            <person name="Nusskern D.R."/>
            <person name="Pacleb J.M."/>
            <person name="Palazzolo M."/>
            <person name="Pittman G.S."/>
            <person name="Pan S."/>
            <person name="Pollard J."/>
            <person name="Puri V."/>
            <person name="Reese M.G."/>
            <person name="Reinert K."/>
            <person name="Remington K."/>
            <person name="Saunders R.D.C."/>
            <person name="Scheeler F."/>
            <person name="Shen H."/>
            <person name="Shue B.C."/>
            <person name="Siden-Kiamos I."/>
            <person name="Simpson M."/>
            <person name="Skupski M.P."/>
            <person name="Smith T.J."/>
            <person name="Spier E."/>
            <person name="Spradling A.C."/>
            <person name="Stapleton M."/>
            <person name="Strong R."/>
            <person name="Sun E."/>
            <person name="Svirskas R."/>
            <person name="Tector C."/>
            <person name="Turner R."/>
            <person name="Venter E."/>
            <person name="Wang A.H."/>
            <person name="Wang X."/>
            <person name="Wang Z.-Y."/>
            <person name="Wassarman D.A."/>
            <person name="Weinstock G.M."/>
            <person name="Weissenbach J."/>
            <person name="Williams S.M."/>
            <person name="Woodage T."/>
            <person name="Worley K.C."/>
            <person name="Wu D."/>
            <person name="Yang S."/>
            <person name="Yao Q.A."/>
            <person name="Ye J."/>
            <person name="Yeh R.-F."/>
            <person name="Zaveri J.S."/>
            <person name="Zhan M."/>
            <person name="Zhang G."/>
            <person name="Zhao Q."/>
            <person name="Zheng L."/>
            <person name="Zheng X.H."/>
            <person name="Zhong F.N."/>
            <person name="Zhong W."/>
            <person name="Zhou X."/>
            <person name="Zhu S.C."/>
            <person name="Zhu X."/>
            <person name="Smith H.O."/>
            <person name="Gibbs R.A."/>
            <person name="Myers E.W."/>
            <person name="Rubin G.M."/>
            <person name="Venter J.C."/>
        </authorList>
    </citation>
    <scope>NUCLEOTIDE SEQUENCE [LARGE SCALE GENOMIC DNA]</scope>
    <source>
        <strain>Berkeley</strain>
    </source>
</reference>
<reference key="3">
    <citation type="journal article" date="2002" name="Genome Biol.">
        <title>Annotation of the Drosophila melanogaster euchromatic genome: a systematic review.</title>
        <authorList>
            <person name="Misra S."/>
            <person name="Crosby M.A."/>
            <person name="Mungall C.J."/>
            <person name="Matthews B.B."/>
            <person name="Campbell K.S."/>
            <person name="Hradecky P."/>
            <person name="Huang Y."/>
            <person name="Kaminker J.S."/>
            <person name="Millburn G.H."/>
            <person name="Prochnik S.E."/>
            <person name="Smith C.D."/>
            <person name="Tupy J.L."/>
            <person name="Whitfield E.J."/>
            <person name="Bayraktaroglu L."/>
            <person name="Berman B.P."/>
            <person name="Bettencourt B.R."/>
            <person name="Celniker S.E."/>
            <person name="de Grey A.D.N.J."/>
            <person name="Drysdale R.A."/>
            <person name="Harris N.L."/>
            <person name="Richter J."/>
            <person name="Russo S."/>
            <person name="Schroeder A.J."/>
            <person name="Shu S.Q."/>
            <person name="Stapleton M."/>
            <person name="Yamada C."/>
            <person name="Ashburner M."/>
            <person name="Gelbart W.M."/>
            <person name="Rubin G.M."/>
            <person name="Lewis S.E."/>
        </authorList>
    </citation>
    <scope>GENOME REANNOTATION</scope>
    <source>
        <strain>Berkeley</strain>
    </source>
</reference>
<reference key="4">
    <citation type="journal article" date="2002" name="Genome Biol.">
        <title>A Drosophila full-length cDNA resource.</title>
        <authorList>
            <person name="Stapleton M."/>
            <person name="Carlson J.W."/>
            <person name="Brokstein P."/>
            <person name="Yu C."/>
            <person name="Champe M."/>
            <person name="George R.A."/>
            <person name="Guarin H."/>
            <person name="Kronmiller B."/>
            <person name="Pacleb J.M."/>
            <person name="Park S."/>
            <person name="Wan K.H."/>
            <person name="Rubin G.M."/>
            <person name="Celniker S.E."/>
        </authorList>
    </citation>
    <scope>NUCLEOTIDE SEQUENCE [LARGE SCALE MRNA]</scope>
    <source>
        <strain>Berkeley</strain>
        <tissue>Ovary</tissue>
    </source>
</reference>
<reference key="5">
    <citation type="submission" date="2008-09" db="EMBL/GenBank/DDBJ databases">
        <authorList>
            <person name="Carlson J.W."/>
            <person name="Booth B."/>
            <person name="Frise E."/>
            <person name="Park S."/>
            <person name="Wan K.H."/>
            <person name="Yu C."/>
            <person name="Celniker S.E."/>
        </authorList>
    </citation>
    <scope>NUCLEOTIDE SEQUENCE [LARGE SCALE MRNA]</scope>
    <source>
        <strain>Berkeley</strain>
    </source>
</reference>
<accession>Q06849</accession>
<accession>B5RJE0</accession>
<accession>Q95TW2</accession>
<accession>Q9VHS1</accession>
<evidence type="ECO:0000250" key="1"/>
<evidence type="ECO:0000255" key="2"/>
<evidence type="ECO:0000305" key="3"/>
<protein>
    <recommendedName>
        <fullName>ADP-ribosylation factor-like protein 2</fullName>
    </recommendedName>
</protein>
<dbReference type="EMBL" id="L14923">
    <property type="protein sequence ID" value="AAA74629.1"/>
    <property type="molecule type" value="Genomic_DNA"/>
</dbReference>
<dbReference type="EMBL" id="AE014297">
    <property type="protein sequence ID" value="AAF54228.1"/>
    <property type="molecule type" value="Genomic_DNA"/>
</dbReference>
<dbReference type="EMBL" id="AY058480">
    <property type="protein sequence ID" value="AAL13709.1"/>
    <property type="molecule type" value="mRNA"/>
</dbReference>
<dbReference type="EMBL" id="BT044414">
    <property type="protein sequence ID" value="ACH92479.1"/>
    <property type="molecule type" value="mRNA"/>
</dbReference>
<dbReference type="RefSeq" id="NP_476886.1">
    <property type="nucleotide sequence ID" value="NM_057538.3"/>
</dbReference>
<dbReference type="SMR" id="Q06849"/>
<dbReference type="BioGRID" id="66174">
    <property type="interactions" value="12"/>
</dbReference>
<dbReference type="DIP" id="DIP-21465N"/>
<dbReference type="FunCoup" id="Q06849">
    <property type="interactions" value="1202"/>
</dbReference>
<dbReference type="IntAct" id="Q06849">
    <property type="interactions" value="61"/>
</dbReference>
<dbReference type="STRING" id="7227.FBpp0081328"/>
<dbReference type="PaxDb" id="7227-FBpp0081328"/>
<dbReference type="DNASU" id="40993"/>
<dbReference type="EnsemblMetazoa" id="FBtr0081838">
    <property type="protein sequence ID" value="FBpp0081328"/>
    <property type="gene ID" value="FBgn0004908"/>
</dbReference>
<dbReference type="GeneID" id="40993"/>
<dbReference type="KEGG" id="dme:Dmel_CG7435"/>
<dbReference type="AGR" id="FB:FBgn0004908"/>
<dbReference type="CTD" id="402"/>
<dbReference type="FlyBase" id="FBgn0004908">
    <property type="gene designation" value="Arl2"/>
</dbReference>
<dbReference type="VEuPathDB" id="VectorBase:FBgn0004908"/>
<dbReference type="eggNOG" id="KOG0073">
    <property type="taxonomic scope" value="Eukaryota"/>
</dbReference>
<dbReference type="GeneTree" id="ENSGT00940000157941"/>
<dbReference type="HOGENOM" id="CLU_040729_12_3_1"/>
<dbReference type="InParanoid" id="Q06849"/>
<dbReference type="OMA" id="KTHHWQI"/>
<dbReference type="OrthoDB" id="2011769at2759"/>
<dbReference type="PhylomeDB" id="Q06849"/>
<dbReference type="Reactome" id="R-DME-9648002">
    <property type="pathway name" value="RAS processing"/>
</dbReference>
<dbReference type="BioGRID-ORCS" id="40993">
    <property type="hits" value="0 hits in 1 CRISPR screen"/>
</dbReference>
<dbReference type="GenomeRNAi" id="40993"/>
<dbReference type="PRO" id="PR:Q06849"/>
<dbReference type="Proteomes" id="UP000000803">
    <property type="component" value="Chromosome 3R"/>
</dbReference>
<dbReference type="Bgee" id="FBgn0004908">
    <property type="expression patterns" value="Expressed in adult class III enteroendocrine cell in adult midgut (Drosophila) and 82 other cell types or tissues"/>
</dbReference>
<dbReference type="GO" id="GO:0005737">
    <property type="term" value="C:cytoplasm"/>
    <property type="evidence" value="ECO:0000318"/>
    <property type="project" value="GO_Central"/>
</dbReference>
<dbReference type="GO" id="GO:0015630">
    <property type="term" value="C:microtubule cytoskeleton"/>
    <property type="evidence" value="ECO:0000318"/>
    <property type="project" value="GO_Central"/>
</dbReference>
<dbReference type="GO" id="GO:0005758">
    <property type="term" value="C:mitochondrial intermembrane space"/>
    <property type="evidence" value="ECO:0000250"/>
    <property type="project" value="FlyBase"/>
</dbReference>
<dbReference type="GO" id="GO:0098793">
    <property type="term" value="C:presynapse"/>
    <property type="evidence" value="ECO:0007669"/>
    <property type="project" value="GOC"/>
</dbReference>
<dbReference type="GO" id="GO:0005525">
    <property type="term" value="F:GTP binding"/>
    <property type="evidence" value="ECO:0000250"/>
    <property type="project" value="FlyBase"/>
</dbReference>
<dbReference type="GO" id="GO:0003924">
    <property type="term" value="F:GTPase activity"/>
    <property type="evidence" value="ECO:0000250"/>
    <property type="project" value="FlyBase"/>
</dbReference>
<dbReference type="GO" id="GO:0000132">
    <property type="term" value="P:establishment of mitotic spindle orientation"/>
    <property type="evidence" value="ECO:0000315"/>
    <property type="project" value="FlyBase"/>
</dbReference>
<dbReference type="GO" id="GO:0045196">
    <property type="term" value="P:establishment or maintenance of neuroblast polarity"/>
    <property type="evidence" value="ECO:0000315"/>
    <property type="project" value="FlyBase"/>
</dbReference>
<dbReference type="GO" id="GO:1902850">
    <property type="term" value="P:microtubule cytoskeleton organization involved in mitosis"/>
    <property type="evidence" value="ECO:0000315"/>
    <property type="project" value="FlyBase"/>
</dbReference>
<dbReference type="GO" id="GO:0007269">
    <property type="term" value="P:neurotransmitter secretion"/>
    <property type="evidence" value="ECO:0000304"/>
    <property type="project" value="FlyBase"/>
</dbReference>
<dbReference type="GO" id="GO:0006457">
    <property type="term" value="P:protein folding"/>
    <property type="evidence" value="ECO:0000318"/>
    <property type="project" value="GO_Central"/>
</dbReference>
<dbReference type="GO" id="GO:0048488">
    <property type="term" value="P:synaptic vesicle endocytosis"/>
    <property type="evidence" value="ECO:0000304"/>
    <property type="project" value="FlyBase"/>
</dbReference>
<dbReference type="CDD" id="cd04154">
    <property type="entry name" value="Arl2"/>
    <property type="match status" value="1"/>
</dbReference>
<dbReference type="FunFam" id="3.40.50.300:FF:000393">
    <property type="entry name" value="ADP-ribosylation factor-like 2, arl2"/>
    <property type="match status" value="1"/>
</dbReference>
<dbReference type="Gene3D" id="3.40.50.300">
    <property type="entry name" value="P-loop containing nucleotide triphosphate hydrolases"/>
    <property type="match status" value="1"/>
</dbReference>
<dbReference type="InterPro" id="IPR045873">
    <property type="entry name" value="Arl2"/>
</dbReference>
<dbReference type="InterPro" id="IPR044612">
    <property type="entry name" value="ARL2/3"/>
</dbReference>
<dbReference type="InterPro" id="IPR027417">
    <property type="entry name" value="P-loop_NTPase"/>
</dbReference>
<dbReference type="InterPro" id="IPR005225">
    <property type="entry name" value="Small_GTP-bd"/>
</dbReference>
<dbReference type="InterPro" id="IPR006689">
    <property type="entry name" value="Small_GTPase_ARF/SAR"/>
</dbReference>
<dbReference type="NCBIfam" id="TIGR00231">
    <property type="entry name" value="small_GTP"/>
    <property type="match status" value="1"/>
</dbReference>
<dbReference type="PANTHER" id="PTHR45697">
    <property type="entry name" value="ADP-RIBOSYLATION FACTOR-LIKE PROTEIN 2-RELATED"/>
    <property type="match status" value="1"/>
</dbReference>
<dbReference type="Pfam" id="PF00025">
    <property type="entry name" value="Arf"/>
    <property type="match status" value="1"/>
</dbReference>
<dbReference type="PRINTS" id="PR00328">
    <property type="entry name" value="SAR1GTPBP"/>
</dbReference>
<dbReference type="SMART" id="SM00177">
    <property type="entry name" value="ARF"/>
    <property type="match status" value="1"/>
</dbReference>
<dbReference type="SMART" id="SM00175">
    <property type="entry name" value="RAB"/>
    <property type="match status" value="1"/>
</dbReference>
<dbReference type="SMART" id="SM00178">
    <property type="entry name" value="SAR"/>
    <property type="match status" value="1"/>
</dbReference>
<dbReference type="SUPFAM" id="SSF52540">
    <property type="entry name" value="P-loop containing nucleoside triphosphate hydrolases"/>
    <property type="match status" value="1"/>
</dbReference>
<dbReference type="PROSITE" id="PS51417">
    <property type="entry name" value="ARF"/>
    <property type="match status" value="1"/>
</dbReference>
<feature type="initiator methionine" description="Removed" evidence="2">
    <location>
        <position position="1"/>
    </location>
</feature>
<feature type="chain" id="PRO_0000207449" description="ADP-ribosylation factor-like protein 2">
    <location>
        <begin position="2"/>
        <end position="184"/>
    </location>
</feature>
<feature type="binding site" evidence="1">
    <location>
        <begin position="23"/>
        <end position="30"/>
    </location>
    <ligand>
        <name>GTP</name>
        <dbReference type="ChEBI" id="CHEBI:37565"/>
    </ligand>
</feature>
<feature type="binding site" evidence="1">
    <location>
        <begin position="66"/>
        <end position="70"/>
    </location>
    <ligand>
        <name>GTP</name>
        <dbReference type="ChEBI" id="CHEBI:37565"/>
    </ligand>
</feature>
<feature type="binding site" evidence="1">
    <location>
        <begin position="125"/>
        <end position="128"/>
    </location>
    <ligand>
        <name>GTP</name>
        <dbReference type="ChEBI" id="CHEBI:37565"/>
    </ligand>
</feature>
<feature type="lipid moiety-binding region" description="N-myristoyl glycine" evidence="2">
    <location>
        <position position="2"/>
    </location>
</feature>
<feature type="sequence conflict" description="In Ref. 4; AAL13709." evidence="3" ref="4">
    <original>S</original>
    <variation>Y</variation>
    <location>
        <position position="72"/>
    </location>
</feature>
<proteinExistence type="evidence at transcript level"/>
<gene>
    <name type="primary">Arl2</name>
    <name type="synonym">Arf84F</name>
    <name type="ORF">CG7435</name>
</gene>
<sequence>MGFLTVLKKMRQKEREMRILLLGLDNAGKTTILKRFNGEPIDTISPTLGFNIKTLEHNGYTLNMWDVGGQKSLRSYWRNYFESTDGLVWVVDSADRMRLESCGQELQVLLQEERLAGATLLVLCNKQDLPGALSSNEIKEILHLEDITTHHWLVAGVSAVTGEKLLSSMDWLIADIAKRIFTLD</sequence>
<comment type="function">
    <text evidence="1">GTP-binding protein involved in protein trafficking; may modulate vesicle budding and uncoating within the Golgi apparatus.</text>
</comment>
<comment type="tissue specificity">
    <text>Ubiquitously expressed.</text>
</comment>
<comment type="similarity">
    <text evidence="3">Belongs to the small GTPase superfamily. Arf family.</text>
</comment>
<organism>
    <name type="scientific">Drosophila melanogaster</name>
    <name type="common">Fruit fly</name>
    <dbReference type="NCBI Taxonomy" id="7227"/>
    <lineage>
        <taxon>Eukaryota</taxon>
        <taxon>Metazoa</taxon>
        <taxon>Ecdysozoa</taxon>
        <taxon>Arthropoda</taxon>
        <taxon>Hexapoda</taxon>
        <taxon>Insecta</taxon>
        <taxon>Pterygota</taxon>
        <taxon>Neoptera</taxon>
        <taxon>Endopterygota</taxon>
        <taxon>Diptera</taxon>
        <taxon>Brachycera</taxon>
        <taxon>Muscomorpha</taxon>
        <taxon>Ephydroidea</taxon>
        <taxon>Drosophilidae</taxon>
        <taxon>Drosophila</taxon>
        <taxon>Sophophora</taxon>
    </lineage>
</organism>
<name>ARL2_DROME</name>
<keyword id="KW-0342">GTP-binding</keyword>
<keyword id="KW-0449">Lipoprotein</keyword>
<keyword id="KW-0519">Myristate</keyword>
<keyword id="KW-0547">Nucleotide-binding</keyword>
<keyword id="KW-1185">Reference proteome</keyword>